<sequence length="86" mass="9882">MAKEELLEMEGVVNEVLPDTRFRVTLENGVEVQAYASGKMRKHRIRILAGDKVSVELSPYDLTKARISFRHKDERPAGAPSQFRRR</sequence>
<proteinExistence type="inferred from homology"/>
<reference key="1">
    <citation type="journal article" date="2005" name="Arch. Microbiol.">
        <title>The genome sequence of an anaerobic aromatic-degrading denitrifying bacterium, strain EbN1.</title>
        <authorList>
            <person name="Rabus R."/>
            <person name="Kube M."/>
            <person name="Heider J."/>
            <person name="Beck A."/>
            <person name="Heitmann K."/>
            <person name="Widdel F."/>
            <person name="Reinhardt R."/>
        </authorList>
    </citation>
    <scope>NUCLEOTIDE SEQUENCE [LARGE SCALE GENOMIC DNA]</scope>
    <source>
        <strain>DSM 19018 / LMG 30748 / EbN1</strain>
    </source>
</reference>
<protein>
    <recommendedName>
        <fullName evidence="1">Translation initiation factor IF-1 2</fullName>
    </recommendedName>
</protein>
<evidence type="ECO:0000255" key="1">
    <source>
        <dbReference type="HAMAP-Rule" id="MF_00075"/>
    </source>
</evidence>
<dbReference type="EMBL" id="CR555306">
    <property type="protein sequence ID" value="CAI09957.1"/>
    <property type="molecule type" value="Genomic_DNA"/>
</dbReference>
<dbReference type="RefSeq" id="WP_011239608.1">
    <property type="nucleotide sequence ID" value="NC_006513.1"/>
</dbReference>
<dbReference type="SMR" id="Q5NYA7"/>
<dbReference type="STRING" id="76114.ebD115"/>
<dbReference type="KEGG" id="eba:ebD115"/>
<dbReference type="eggNOG" id="COG0361">
    <property type="taxonomic scope" value="Bacteria"/>
</dbReference>
<dbReference type="HOGENOM" id="CLU_151267_4_1_4"/>
<dbReference type="OrthoDB" id="9803250at2"/>
<dbReference type="Proteomes" id="UP000006552">
    <property type="component" value="Chromosome"/>
</dbReference>
<dbReference type="GO" id="GO:0005829">
    <property type="term" value="C:cytosol"/>
    <property type="evidence" value="ECO:0007669"/>
    <property type="project" value="TreeGrafter"/>
</dbReference>
<dbReference type="GO" id="GO:0043022">
    <property type="term" value="F:ribosome binding"/>
    <property type="evidence" value="ECO:0007669"/>
    <property type="project" value="UniProtKB-UniRule"/>
</dbReference>
<dbReference type="GO" id="GO:0019843">
    <property type="term" value="F:rRNA binding"/>
    <property type="evidence" value="ECO:0007669"/>
    <property type="project" value="UniProtKB-UniRule"/>
</dbReference>
<dbReference type="GO" id="GO:0003743">
    <property type="term" value="F:translation initiation factor activity"/>
    <property type="evidence" value="ECO:0007669"/>
    <property type="project" value="UniProtKB-UniRule"/>
</dbReference>
<dbReference type="CDD" id="cd04451">
    <property type="entry name" value="S1_IF1"/>
    <property type="match status" value="1"/>
</dbReference>
<dbReference type="FunFam" id="2.40.50.140:FF:000002">
    <property type="entry name" value="Translation initiation factor IF-1"/>
    <property type="match status" value="1"/>
</dbReference>
<dbReference type="Gene3D" id="2.40.50.140">
    <property type="entry name" value="Nucleic acid-binding proteins"/>
    <property type="match status" value="1"/>
</dbReference>
<dbReference type="HAMAP" id="MF_00075">
    <property type="entry name" value="IF_1"/>
    <property type="match status" value="1"/>
</dbReference>
<dbReference type="InterPro" id="IPR012340">
    <property type="entry name" value="NA-bd_OB-fold"/>
</dbReference>
<dbReference type="InterPro" id="IPR006196">
    <property type="entry name" value="RNA-binding_domain_S1_IF1"/>
</dbReference>
<dbReference type="InterPro" id="IPR003029">
    <property type="entry name" value="S1_domain"/>
</dbReference>
<dbReference type="InterPro" id="IPR004368">
    <property type="entry name" value="TIF_IF1"/>
</dbReference>
<dbReference type="NCBIfam" id="TIGR00008">
    <property type="entry name" value="infA"/>
    <property type="match status" value="1"/>
</dbReference>
<dbReference type="PANTHER" id="PTHR33370">
    <property type="entry name" value="TRANSLATION INITIATION FACTOR IF-1, CHLOROPLASTIC"/>
    <property type="match status" value="1"/>
</dbReference>
<dbReference type="PANTHER" id="PTHR33370:SF1">
    <property type="entry name" value="TRANSLATION INITIATION FACTOR IF-1, CHLOROPLASTIC"/>
    <property type="match status" value="1"/>
</dbReference>
<dbReference type="Pfam" id="PF01176">
    <property type="entry name" value="eIF-1a"/>
    <property type="match status" value="1"/>
</dbReference>
<dbReference type="SMART" id="SM00316">
    <property type="entry name" value="S1"/>
    <property type="match status" value="1"/>
</dbReference>
<dbReference type="SUPFAM" id="SSF50249">
    <property type="entry name" value="Nucleic acid-binding proteins"/>
    <property type="match status" value="1"/>
</dbReference>
<dbReference type="PROSITE" id="PS50832">
    <property type="entry name" value="S1_IF1_TYPE"/>
    <property type="match status" value="1"/>
</dbReference>
<name>IF12_AROAE</name>
<keyword id="KW-0963">Cytoplasm</keyword>
<keyword id="KW-0396">Initiation factor</keyword>
<keyword id="KW-0648">Protein biosynthesis</keyword>
<keyword id="KW-1185">Reference proteome</keyword>
<keyword id="KW-0694">RNA-binding</keyword>
<keyword id="KW-0699">rRNA-binding</keyword>
<gene>
    <name evidence="1" type="primary">infA2</name>
    <name type="ordered locus">AZOSEA38320</name>
    <name type="ORF">ebD115</name>
</gene>
<comment type="function">
    <text evidence="1">One of the essential components for the initiation of protein synthesis. Stabilizes the binding of IF-2 and IF-3 on the 30S subunit to which N-formylmethionyl-tRNA(fMet) subsequently binds. Helps modulate mRNA selection, yielding the 30S pre-initiation complex (PIC). Upon addition of the 50S ribosomal subunit IF-1, IF-2 and IF-3 are released leaving the mature 70S translation initiation complex.</text>
</comment>
<comment type="subunit">
    <text evidence="1">Component of the 30S ribosomal translation pre-initiation complex which assembles on the 30S ribosome in the order IF-2 and IF-3, IF-1 and N-formylmethionyl-tRNA(fMet); mRNA recruitment can occur at any time during PIC assembly.</text>
</comment>
<comment type="subcellular location">
    <subcellularLocation>
        <location evidence="1">Cytoplasm</location>
    </subcellularLocation>
</comment>
<comment type="similarity">
    <text evidence="1">Belongs to the IF-1 family.</text>
</comment>
<feature type="chain" id="PRO_0000263764" description="Translation initiation factor IF-1 2">
    <location>
        <begin position="1"/>
        <end position="86"/>
    </location>
</feature>
<feature type="domain" description="S1-like" evidence="1">
    <location>
        <begin position="1"/>
        <end position="72"/>
    </location>
</feature>
<organism>
    <name type="scientific">Aromatoleum aromaticum (strain DSM 19018 / LMG 30748 / EbN1)</name>
    <name type="common">Azoarcus sp. (strain EbN1)</name>
    <dbReference type="NCBI Taxonomy" id="76114"/>
    <lineage>
        <taxon>Bacteria</taxon>
        <taxon>Pseudomonadati</taxon>
        <taxon>Pseudomonadota</taxon>
        <taxon>Betaproteobacteria</taxon>
        <taxon>Rhodocyclales</taxon>
        <taxon>Rhodocyclaceae</taxon>
        <taxon>Aromatoleum</taxon>
    </lineage>
</organism>
<accession>Q5NYA7</accession>